<reference key="1">
    <citation type="journal article" date="2004" name="J. Bacteriol.">
        <title>The pKO2 linear plasmid prophage of Klebsiella oxytoca.</title>
        <authorList>
            <person name="Casjens S.R."/>
            <person name="Gilcrease E.B."/>
            <person name="Huang W.M."/>
            <person name="Bunny K.L."/>
            <person name="Pedulla M.L."/>
            <person name="Ford M.E."/>
            <person name="Houtz J.M."/>
            <person name="Hatfull G.F."/>
            <person name="Hendrix R.W."/>
        </authorList>
    </citation>
    <scope>NUCLEOTIDE SEQUENCE [GENOMIC DNA]</scope>
    <scope>FUNCTION</scope>
</reference>
<reference evidence="8" key="2">
    <citation type="journal article" date="2007" name="Mol. Cell">
        <title>An interlocked dimer of the protelomerase TelK distorts DNA structure for the formation of hairpin telomeres.</title>
        <authorList>
            <person name="Aihara H."/>
            <person name="Huang W.M."/>
            <person name="Ellenberger T."/>
        </authorList>
    </citation>
    <scope>X-RAY CRYSTALLOGRAPHY (3.20 ANGSTROMS) OF 1-538 IN COMPLEX WITH DNA</scope>
    <scope>SUBUNIT</scope>
    <scope>ACTIVE SITE</scope>
    <scope>CATALYTIC ACTIVITY</scope>
</reference>
<gene>
    <name evidence="7" type="ORF">26</name>
</gene>
<name>PTELO_BPKO2</name>
<organismHost>
    <name type="scientific">Klebsiella oxytoca</name>
    <dbReference type="NCBI Taxonomy" id="571"/>
</organismHost>
<feature type="chain" id="PRO_0000459451" description="Protelomerase">
    <location>
        <begin position="1"/>
        <end position="640"/>
    </location>
</feature>
<feature type="region of interest" description="Disordered" evidence="2">
    <location>
        <begin position="545"/>
        <end position="605"/>
    </location>
</feature>
<feature type="compositionally biased region" description="Acidic residues" evidence="2">
    <location>
        <begin position="545"/>
        <end position="585"/>
    </location>
</feature>
<feature type="active site" description="Nucleophile" evidence="4">
    <location>
        <position position="425"/>
    </location>
</feature>
<feature type="binding site" evidence="4">
    <location>
        <position position="275"/>
    </location>
    <ligand>
        <name>DNA</name>
        <dbReference type="ChEBI" id="CHEBI:16991"/>
    </ligand>
</feature>
<feature type="binding site" evidence="4">
    <location>
        <position position="300"/>
    </location>
    <ligand>
        <name>DNA</name>
        <dbReference type="ChEBI" id="CHEBI:16991"/>
    </ligand>
</feature>
<feature type="binding site" evidence="4">
    <location>
        <position position="383"/>
    </location>
    <ligand>
        <name>DNA</name>
        <dbReference type="ChEBI" id="CHEBI:16991"/>
    </ligand>
</feature>
<feature type="binding site" evidence="4">
    <location>
        <position position="416"/>
    </location>
    <ligand>
        <name>DNA</name>
        <dbReference type="ChEBI" id="CHEBI:16991"/>
    </ligand>
</feature>
<feature type="helix" evidence="9">
    <location>
        <begin position="11"/>
        <end position="19"/>
    </location>
</feature>
<feature type="turn" evidence="9">
    <location>
        <begin position="20"/>
        <end position="27"/>
    </location>
</feature>
<feature type="strand" evidence="9">
    <location>
        <begin position="28"/>
        <end position="30"/>
    </location>
</feature>
<feature type="helix" evidence="9">
    <location>
        <begin position="32"/>
        <end position="51"/>
    </location>
</feature>
<feature type="strand" evidence="9">
    <location>
        <begin position="52"/>
        <end position="54"/>
    </location>
</feature>
<feature type="helix" evidence="9">
    <location>
        <begin position="63"/>
        <end position="75"/>
    </location>
</feature>
<feature type="turn" evidence="9">
    <location>
        <begin position="76"/>
        <end position="79"/>
    </location>
</feature>
<feature type="helix" evidence="9">
    <location>
        <begin position="83"/>
        <end position="95"/>
    </location>
</feature>
<feature type="helix" evidence="9">
    <location>
        <begin position="100"/>
        <end position="104"/>
    </location>
</feature>
<feature type="strand" evidence="9">
    <location>
        <begin position="107"/>
        <end position="109"/>
    </location>
</feature>
<feature type="helix" evidence="9">
    <location>
        <begin position="111"/>
        <end position="125"/>
    </location>
</feature>
<feature type="helix" evidence="9">
    <location>
        <begin position="128"/>
        <end position="135"/>
    </location>
</feature>
<feature type="turn" evidence="9">
    <location>
        <begin position="142"/>
        <end position="144"/>
    </location>
</feature>
<feature type="helix" evidence="9">
    <location>
        <begin position="145"/>
        <end position="152"/>
    </location>
</feature>
<feature type="helix" evidence="9">
    <location>
        <begin position="153"/>
        <end position="155"/>
    </location>
</feature>
<feature type="turn" evidence="9">
    <location>
        <begin position="157"/>
        <end position="159"/>
    </location>
</feature>
<feature type="helix" evidence="9">
    <location>
        <begin position="160"/>
        <end position="163"/>
    </location>
</feature>
<feature type="strand" evidence="9">
    <location>
        <begin position="166"/>
        <end position="169"/>
    </location>
</feature>
<feature type="helix" evidence="9">
    <location>
        <begin position="172"/>
        <end position="194"/>
    </location>
</feature>
<feature type="helix" evidence="9">
    <location>
        <begin position="200"/>
        <end position="204"/>
    </location>
</feature>
<feature type="helix" evidence="9">
    <location>
        <begin position="209"/>
        <end position="227"/>
    </location>
</feature>
<feature type="strand" evidence="9">
    <location>
        <begin position="231"/>
        <end position="234"/>
    </location>
</feature>
<feature type="helix" evidence="9">
    <location>
        <begin position="235"/>
        <end position="247"/>
    </location>
</feature>
<feature type="helix" evidence="9">
    <location>
        <begin position="250"/>
        <end position="252"/>
    </location>
</feature>
<feature type="helix" evidence="9">
    <location>
        <begin position="259"/>
        <end position="261"/>
    </location>
</feature>
<feature type="helix" evidence="9">
    <location>
        <begin position="262"/>
        <end position="272"/>
    </location>
</feature>
<feature type="helix" evidence="9">
    <location>
        <begin position="276"/>
        <end position="280"/>
    </location>
</feature>
<feature type="strand" evidence="9">
    <location>
        <begin position="284"/>
        <end position="287"/>
    </location>
</feature>
<feature type="strand" evidence="9">
    <location>
        <begin position="289"/>
        <end position="296"/>
    </location>
</feature>
<feature type="strand" evidence="9">
    <location>
        <begin position="309"/>
        <end position="313"/>
    </location>
</feature>
<feature type="helix" evidence="9">
    <location>
        <begin position="318"/>
        <end position="328"/>
    </location>
</feature>
<feature type="helix" evidence="9">
    <location>
        <begin position="332"/>
        <end position="334"/>
    </location>
</feature>
<feature type="helix" evidence="9">
    <location>
        <begin position="337"/>
        <end position="340"/>
    </location>
</feature>
<feature type="helix" evidence="9">
    <location>
        <begin position="352"/>
        <end position="372"/>
    </location>
</feature>
<feature type="strand" evidence="9">
    <location>
        <begin position="373"/>
        <end position="376"/>
    </location>
</feature>
<feature type="helix" evidence="9">
    <location>
        <begin position="381"/>
        <end position="394"/>
    </location>
</feature>
<feature type="turn" evidence="9">
    <location>
        <begin position="395"/>
        <end position="397"/>
    </location>
</feature>
<feature type="helix" evidence="9">
    <location>
        <begin position="399"/>
        <end position="401"/>
    </location>
</feature>
<feature type="helix" evidence="9">
    <location>
        <begin position="406"/>
        <end position="414"/>
    </location>
</feature>
<feature type="helix" evidence="9">
    <location>
        <begin position="421"/>
        <end position="423"/>
    </location>
</feature>
<feature type="strand" evidence="9">
    <location>
        <begin position="428"/>
        <end position="432"/>
    </location>
</feature>
<feature type="helix" evidence="9">
    <location>
        <begin position="445"/>
        <end position="452"/>
    </location>
</feature>
<feature type="helix" evidence="9">
    <location>
        <begin position="455"/>
        <end position="457"/>
    </location>
</feature>
<feature type="strand" evidence="9">
    <location>
        <begin position="458"/>
        <end position="464"/>
    </location>
</feature>
<feature type="helix" evidence="9">
    <location>
        <begin position="466"/>
        <end position="480"/>
    </location>
</feature>
<feature type="helix" evidence="9">
    <location>
        <begin position="488"/>
        <end position="491"/>
    </location>
</feature>
<feature type="helix" evidence="9">
    <location>
        <begin position="492"/>
        <end position="494"/>
    </location>
</feature>
<feature type="turn" evidence="9">
    <location>
        <begin position="498"/>
        <end position="500"/>
    </location>
</feature>
<feature type="helix" evidence="9">
    <location>
        <begin position="501"/>
        <end position="508"/>
    </location>
</feature>
<feature type="turn" evidence="9">
    <location>
        <begin position="509"/>
        <end position="513"/>
    </location>
</feature>
<feature type="strand" evidence="9">
    <location>
        <begin position="514"/>
        <end position="516"/>
    </location>
</feature>
<feature type="strand" evidence="9">
    <location>
        <begin position="518"/>
        <end position="523"/>
    </location>
</feature>
<dbReference type="EC" id="3.1.22.-" evidence="4"/>
<dbReference type="EMBL" id="AY374448">
    <property type="protein sequence ID" value="AAR83042.1"/>
    <property type="molecule type" value="Genomic_DNA"/>
</dbReference>
<dbReference type="RefSeq" id="YP_006606.1">
    <property type="nucleotide sequence ID" value="NC_005857.1"/>
</dbReference>
<dbReference type="PDB" id="2V6E">
    <property type="method" value="X-ray"/>
    <property type="resolution" value="3.20 A"/>
    <property type="chains" value="A/B=1-538"/>
</dbReference>
<dbReference type="PDBsum" id="2V6E"/>
<dbReference type="SMR" id="Q6UAV6"/>
<dbReference type="KEGG" id="vg:2777937"/>
<dbReference type="OrthoDB" id="7458at10239"/>
<dbReference type="EvolutionaryTrace" id="Q6UAV6"/>
<dbReference type="Proteomes" id="UP000001047">
    <property type="component" value="Genome"/>
</dbReference>
<dbReference type="GO" id="GO:0003677">
    <property type="term" value="F:DNA binding"/>
    <property type="evidence" value="ECO:0007669"/>
    <property type="project" value="UniProtKB-KW"/>
</dbReference>
<dbReference type="GO" id="GO:0004519">
    <property type="term" value="F:endonuclease activity"/>
    <property type="evidence" value="ECO:0007669"/>
    <property type="project" value="UniProtKB-KW"/>
</dbReference>
<dbReference type="GO" id="GO:0006260">
    <property type="term" value="P:DNA replication"/>
    <property type="evidence" value="ECO:0007669"/>
    <property type="project" value="UniProtKB-KW"/>
</dbReference>
<dbReference type="GO" id="GO:0039693">
    <property type="term" value="P:viral DNA genome replication"/>
    <property type="evidence" value="ECO:0007669"/>
    <property type="project" value="UniProtKB-KW"/>
</dbReference>
<dbReference type="Gene3D" id="1.10.10.2040">
    <property type="match status" value="1"/>
</dbReference>
<dbReference type="Gene3D" id="1.10.287.3180">
    <property type="match status" value="1"/>
</dbReference>
<dbReference type="Gene3D" id="1.20.1440.270">
    <property type="match status" value="1"/>
</dbReference>
<dbReference type="Gene3D" id="1.10.443.30">
    <property type="entry name" value="Telomere resolvase"/>
    <property type="match status" value="1"/>
</dbReference>
<dbReference type="InterPro" id="IPR032047">
    <property type="entry name" value="ResT/TelK_cat"/>
</dbReference>
<dbReference type="InterPro" id="IPR038280">
    <property type="entry name" value="ResT/TelK_cat_sf"/>
</dbReference>
<dbReference type="InterPro" id="IPR049460">
    <property type="entry name" value="TelK_muzzle"/>
</dbReference>
<dbReference type="InterPro" id="IPR055040">
    <property type="entry name" value="TelK_N"/>
</dbReference>
<dbReference type="InterPro" id="IPR049454">
    <property type="entry name" value="TelK_stirrup"/>
</dbReference>
<dbReference type="Pfam" id="PF16684">
    <property type="entry name" value="ResT-TelK_cat"/>
    <property type="match status" value="1"/>
</dbReference>
<dbReference type="Pfam" id="PF20849">
    <property type="entry name" value="TelK_muzzle"/>
    <property type="match status" value="1"/>
</dbReference>
<dbReference type="Pfam" id="PF22853">
    <property type="entry name" value="TelK_N"/>
    <property type="match status" value="1"/>
</dbReference>
<dbReference type="Pfam" id="PF20818">
    <property type="entry name" value="TelK_stirrup"/>
    <property type="match status" value="1"/>
</dbReference>
<sequence length="640" mass="73415">MRKVKIGELINSLVSEVEAIDASDRPQGDKTKKIKAAALKYKNALFNDKRKFRGKGLEKRISANTFNSYMSRARKRFDDRLHHNFEKNVIKLSEKYPLYSEELSSWLSMPAASIRQHMSRLQAKLKEIMPLAEDLSNIKIGTKNSEAKINKLANKYPEWQFAISDLNSEDWKDKRDYLYKLFQQGSSLLEDLNNLKVNHEVLYHLQLSSAERTSIQQRWANVLSEKKRNVVVIDYPRYMQAIYDIINKPIVSFDLTTRRGMAPLAFALAALSGRRMIEIMLQGEFSVAGKYTVTFLGQAKKRSEDKGISRKIYTLCDATLFVSLVNELRSCPAAADFDEVIKGYGENDTRSENGRINAILATAFNPWVKTFLGDDRRVYKDSRAIYARIAYEMFFRVDPRWKNVDEDVFFMEILGHDDENTQLHYKQFKLANFSRTWRPNVGEENARLAALQKLDSMMPDFARGDAGVRIHETVKQLVEQDPSIKITNSTLRPFNFSTRLIPRYLEFAADALGQFVGENGQWQLKDEAPAIVLPDEEILEPMDDVDLDDENHDDETLDDDEIEVDESEGEELEEAGDAEEAEVAEQEEKHPGKPNFKAPRDNGDGTYMVEFEFGGRHYAWSGAAGNRVEAMQSAWSAYFK</sequence>
<evidence type="ECO:0000250" key="1">
    <source>
        <dbReference type="UniProtKB" id="Q77WP1"/>
    </source>
</evidence>
<evidence type="ECO:0000256" key="2">
    <source>
        <dbReference type="SAM" id="MobiDB-lite"/>
    </source>
</evidence>
<evidence type="ECO:0000269" key="3">
    <source>
    </source>
</evidence>
<evidence type="ECO:0000269" key="4">
    <source>
    </source>
</evidence>
<evidence type="ECO:0000303" key="5">
    <source>
    </source>
</evidence>
<evidence type="ECO:0000305" key="6"/>
<evidence type="ECO:0000312" key="7">
    <source>
        <dbReference type="EMBL" id="AAR83042.1"/>
    </source>
</evidence>
<evidence type="ECO:0007744" key="8">
    <source>
        <dbReference type="PDB" id="2V6E"/>
    </source>
</evidence>
<evidence type="ECO:0007829" key="9">
    <source>
        <dbReference type="PDB" id="2V6E"/>
    </source>
</evidence>
<accession>Q6UAV6</accession>
<keyword id="KW-0002">3D-structure</keyword>
<keyword id="KW-0235">DNA replication</keyword>
<keyword id="KW-0238">DNA-binding</keyword>
<keyword id="KW-0255">Endonuclease</keyword>
<keyword id="KW-0378">Hydrolase</keyword>
<keyword id="KW-0540">Nuclease</keyword>
<keyword id="KW-1185">Reference proteome</keyword>
<keyword id="KW-1194">Viral DNA replication</keyword>
<proteinExistence type="evidence at protein level"/>
<organism>
    <name type="scientific">Klebsiella oxytoca phage phiKO2</name>
    <name type="common">Bacteriophage phiKO2</name>
    <dbReference type="NCBI Taxonomy" id="255431"/>
    <lineage>
        <taxon>Viruses</taxon>
        <taxon>Duplodnaviria</taxon>
        <taxon>Heunggongvirae</taxon>
        <taxon>Uroviricota</taxon>
        <taxon>Caudoviricetes</taxon>
    </lineage>
</organism>
<comment type="function">
    <text evidence="1 3">Converts the circular intermediates produced by the viral replication and carrying a joined telomere site to a linear DNA molecule with covalently closed hairpin ends (PubMed:14996813). The viral circular DNA is cleaved at a palindromic site called telRL thereby generating a linear prophage plasmid with telomeres (PubMed:14996813). Binds covalently to the 3'-phosphoryl of the cleaved strands (By similarity).</text>
</comment>
<comment type="subunit">
    <text evidence="1 4">Monomer (By similarity). Homodimer; in presence of DNA (PubMed:17889664).</text>
</comment>
<comment type="similarity">
    <text evidence="6">Belongs to the Caudoviricetes Protelomerase family.</text>
</comment>
<protein>
    <recommendedName>
        <fullName evidence="6">Protelomerase</fullName>
        <ecNumber evidence="4">3.1.22.-</ecNumber>
    </recommendedName>
    <alternativeName>
        <fullName evidence="6">Gene product 26</fullName>
        <shortName>Gp26</shortName>
    </alternativeName>
    <alternativeName>
        <fullName evidence="6">Hairpin telomere resolvase</fullName>
    </alternativeName>
    <alternativeName>
        <fullName evidence="5">TelK</fullName>
    </alternativeName>
</protein>